<reference key="1">
    <citation type="journal article" date="2005" name="Genome Biol.">
        <title>Full-length cDNAs from chicken bursal lymphocytes to facilitate gene function analysis.</title>
        <authorList>
            <person name="Caldwell R.B."/>
            <person name="Kierzek A.M."/>
            <person name="Arakawa H."/>
            <person name="Bezzubov Y."/>
            <person name="Zaim J."/>
            <person name="Fiedler P."/>
            <person name="Kutter S."/>
            <person name="Blagodatski A."/>
            <person name="Kostovska D."/>
            <person name="Koter M."/>
            <person name="Plachy J."/>
            <person name="Carninci P."/>
            <person name="Hayashizaki Y."/>
            <person name="Buerstedde J.-M."/>
        </authorList>
    </citation>
    <scope>NUCLEOTIDE SEQUENCE [LARGE SCALE MRNA]</scope>
    <source>
        <strain>CB</strain>
        <tissue>Bursa of Fabricius</tissue>
    </source>
</reference>
<comment type="function">
    <text evidence="2">Catalyzes the 2-thiolation of uridine at the wobble position (U34) of mitochondrial tRNA(Lys), tRNA(Glu) and tRNA(Gln). Required for the formation of 5-taurinomethyl-2-thiouridine (tm5s2U) of mitochondrial tRNA(Lys), tRNA(Glu), and tRNA(Gln) at the wobble position. ATP is required to activate the C2 atom of the wobble base.</text>
</comment>
<comment type="catalytic activity">
    <reaction evidence="3">
        <text>5-taurinomethyluridine(34) in tRNA + S-sulfanyl-L-cysteinyl-[protein] + AH2 + ATP = 5-taurinomethyl-2-thiouridine(34) in tRNA + L-cysteinyl-[protein] + A + AMP + diphosphate + H(+)</text>
        <dbReference type="Rhea" id="RHEA:47040"/>
        <dbReference type="Rhea" id="RHEA-COMP:10131"/>
        <dbReference type="Rhea" id="RHEA-COMP:11726"/>
        <dbReference type="Rhea" id="RHEA-COMP:11732"/>
        <dbReference type="Rhea" id="RHEA-COMP:11733"/>
        <dbReference type="ChEBI" id="CHEBI:13193"/>
        <dbReference type="ChEBI" id="CHEBI:15378"/>
        <dbReference type="ChEBI" id="CHEBI:17499"/>
        <dbReference type="ChEBI" id="CHEBI:29950"/>
        <dbReference type="ChEBI" id="CHEBI:30616"/>
        <dbReference type="ChEBI" id="CHEBI:33019"/>
        <dbReference type="ChEBI" id="CHEBI:61963"/>
        <dbReference type="ChEBI" id="CHEBI:87171"/>
        <dbReference type="ChEBI" id="CHEBI:87172"/>
        <dbReference type="ChEBI" id="CHEBI:456215"/>
        <dbReference type="EC" id="2.8.1.14"/>
    </reaction>
</comment>
<comment type="subcellular location">
    <subcellularLocation>
        <location evidence="1">Mitochondrion</location>
    </subcellularLocation>
</comment>
<comment type="miscellaneous">
    <text evidence="1">During the reaction, ATP is used to activate the C2 atom of U34 by adenylation. After this, the persulfide sulfur on the catalytic cysteine is transferred to the C2 atom of the wobble base (U34) of mitochondrial tRNA(Lys), tRNA(Glu) and tRNA(Gln). The reaction probably involves hydrogen sulfide that is generated from the persulfide intermediate and that acts as a nucleophile towards the activated C2 atom on U34. Subsequently, a transient disulfide bond is formed between the two active site cysteine residues (By similarity).</text>
</comment>
<comment type="similarity">
    <text evidence="5">Belongs to the MnmA/TRMU family.</text>
</comment>
<proteinExistence type="evidence at transcript level"/>
<protein>
    <recommendedName>
        <fullName>Mitochondrial tRNA-specific 2-thiouridylase 1</fullName>
        <ecNumber evidence="3">2.8.1.14</ecNumber>
    </recommendedName>
</protein>
<name>MTU1_CHICK</name>
<keyword id="KW-0067">ATP-binding</keyword>
<keyword id="KW-1015">Disulfide bond</keyword>
<keyword id="KW-0496">Mitochondrion</keyword>
<keyword id="KW-0547">Nucleotide-binding</keyword>
<keyword id="KW-1185">Reference proteome</keyword>
<keyword id="KW-0694">RNA-binding</keyword>
<keyword id="KW-0808">Transferase</keyword>
<keyword id="KW-0819">tRNA processing</keyword>
<keyword id="KW-0820">tRNA-binding</keyword>
<evidence type="ECO:0000250" key="1"/>
<evidence type="ECO:0000250" key="2">
    <source>
        <dbReference type="UniProtKB" id="O75648"/>
    </source>
</evidence>
<evidence type="ECO:0000250" key="3">
    <source>
        <dbReference type="UniProtKB" id="Q12093"/>
    </source>
</evidence>
<evidence type="ECO:0000256" key="4">
    <source>
        <dbReference type="SAM" id="MobiDB-lite"/>
    </source>
</evidence>
<evidence type="ECO:0000305" key="5"/>
<organism>
    <name type="scientific">Gallus gallus</name>
    <name type="common">Chicken</name>
    <dbReference type="NCBI Taxonomy" id="9031"/>
    <lineage>
        <taxon>Eukaryota</taxon>
        <taxon>Metazoa</taxon>
        <taxon>Chordata</taxon>
        <taxon>Craniata</taxon>
        <taxon>Vertebrata</taxon>
        <taxon>Euteleostomi</taxon>
        <taxon>Archelosauria</taxon>
        <taxon>Archosauria</taxon>
        <taxon>Dinosauria</taxon>
        <taxon>Saurischia</taxon>
        <taxon>Theropoda</taxon>
        <taxon>Coelurosauria</taxon>
        <taxon>Aves</taxon>
        <taxon>Neognathae</taxon>
        <taxon>Galloanserae</taxon>
        <taxon>Galliformes</taxon>
        <taxon>Phasianidae</taxon>
        <taxon>Phasianinae</taxon>
        <taxon>Gallus</taxon>
    </lineage>
</organism>
<feature type="chain" id="PRO_0000248303" description="Mitochondrial tRNA-specific 2-thiouridylase 1">
    <location>
        <begin position="1"/>
        <end position="424"/>
    </location>
</feature>
<feature type="region of interest" description="Interaction with target base in tRNA" evidence="1">
    <location>
        <begin position="97"/>
        <end position="99"/>
    </location>
</feature>
<feature type="region of interest" description="Interaction with tRNA" evidence="1">
    <location>
        <begin position="172"/>
        <end position="174"/>
    </location>
</feature>
<feature type="region of interest" description="Interaction with tRNA" evidence="1">
    <location>
        <begin position="343"/>
        <end position="344"/>
    </location>
</feature>
<feature type="region of interest" description="Disordered" evidence="4">
    <location>
        <begin position="403"/>
        <end position="424"/>
    </location>
</feature>
<feature type="compositionally biased region" description="Basic and acidic residues" evidence="4">
    <location>
        <begin position="406"/>
        <end position="424"/>
    </location>
</feature>
<feature type="active site" description="Nucleophile" evidence="1">
    <location>
        <position position="102"/>
    </location>
</feature>
<feature type="active site" description="Cysteine persulfide intermediate" evidence="1">
    <location>
        <position position="231"/>
    </location>
</feature>
<feature type="binding site" evidence="1">
    <location>
        <begin position="11"/>
        <end position="18"/>
    </location>
    <ligand>
        <name>ATP</name>
        <dbReference type="ChEBI" id="CHEBI:30616"/>
    </ligand>
</feature>
<feature type="binding site" evidence="1">
    <location>
        <position position="37"/>
    </location>
    <ligand>
        <name>ATP</name>
        <dbReference type="ChEBI" id="CHEBI:30616"/>
    </ligand>
</feature>
<feature type="binding site" evidence="1">
    <location>
        <position position="127"/>
    </location>
    <ligand>
        <name>ATP</name>
        <dbReference type="ChEBI" id="CHEBI:30616"/>
    </ligand>
</feature>
<feature type="site" description="Interaction with tRNA" evidence="1">
    <location>
        <position position="128"/>
    </location>
</feature>
<feature type="site" description="Interaction with tRNA" evidence="1">
    <location>
        <position position="276"/>
    </location>
</feature>
<feature type="site" description="Interaction with tRNA" evidence="1">
    <location>
        <position position="376"/>
    </location>
</feature>
<feature type="disulfide bond" description="Alternate" evidence="1">
    <location>
        <begin position="102"/>
        <end position="231"/>
    </location>
</feature>
<sequence>MLAAGRRVACAVSGGVDSAVAALLLRRRGYQVTGVFMKNWDPLDEQGACSVDRDCEDAYRVCQKLDIPFHQVSYVKEYWNEVFSDLLKEYELGRTPNPDIVCNKHIKFNHFLHYAMDNLGADAIATGHYARTSLEDEEVFQQKHTKRPRELFRNRFEVRNTVKLLQGADLFKDQTFFLSQISQDALRKTIFPLGDLTKSFVRKIASEHGLHHVLKKKEACTTFPFQSMGVCFIGERNFEKFLLEYLEPQPGNFVSIEDKKVMGTHKGWFLYTIGQRARLAGLQGAWFVVDKDVSTGDIFVAPSTDHPALFRDLLRTNRVHWIAEEPPAELVRDKMMECHFRFRHQMALVPCVLTLNQDGSVWVTLVKPARALTPGQFAVFYKGDECLGSGKILRLGPSVFTMQQGRNREEGTKKEDIDKVEPAT</sequence>
<gene>
    <name type="primary">TRMU</name>
    <name type="synonym">MTU1</name>
    <name type="ORF">RCJMB04_8p20</name>
</gene>
<accession>Q5ZKW0</accession>
<dbReference type="EC" id="2.8.1.14" evidence="3"/>
<dbReference type="EMBL" id="AJ719974">
    <property type="protein sequence ID" value="CAG31633.1"/>
    <property type="molecule type" value="mRNA"/>
</dbReference>
<dbReference type="RefSeq" id="NP_001026522.1">
    <property type="nucleotide sequence ID" value="NM_001031351.2"/>
</dbReference>
<dbReference type="SMR" id="Q5ZKW0"/>
<dbReference type="FunCoup" id="Q5ZKW0">
    <property type="interactions" value="945"/>
</dbReference>
<dbReference type="STRING" id="9031.ENSGALP00000053750"/>
<dbReference type="PaxDb" id="9031-ENSGALP00000006683"/>
<dbReference type="Ensembl" id="ENSGALT00010019693.1">
    <property type="protein sequence ID" value="ENSGALP00010011241.1"/>
    <property type="gene ID" value="ENSGALG00010008230.1"/>
</dbReference>
<dbReference type="GeneID" id="425909"/>
<dbReference type="KEGG" id="gga:425909"/>
<dbReference type="CTD" id="55687"/>
<dbReference type="VEuPathDB" id="HostDB:geneid_425909"/>
<dbReference type="eggNOG" id="KOG2805">
    <property type="taxonomic scope" value="Eukaryota"/>
</dbReference>
<dbReference type="GeneTree" id="ENSGT00390000014323"/>
<dbReference type="InParanoid" id="Q5ZKW0"/>
<dbReference type="OMA" id="PFYVWDL"/>
<dbReference type="OrthoDB" id="3685at2759"/>
<dbReference type="PhylomeDB" id="Q5ZKW0"/>
<dbReference type="TreeFam" id="TF105611"/>
<dbReference type="PRO" id="PR:Q5ZKW0"/>
<dbReference type="Proteomes" id="UP000000539">
    <property type="component" value="Chromosome 1"/>
</dbReference>
<dbReference type="Bgee" id="ENSGALG00000031922">
    <property type="expression patterns" value="Expressed in testis and 12 other cell types or tissues"/>
</dbReference>
<dbReference type="GO" id="GO:0005739">
    <property type="term" value="C:mitochondrion"/>
    <property type="evidence" value="ECO:0000318"/>
    <property type="project" value="GO_Central"/>
</dbReference>
<dbReference type="GO" id="GO:0005524">
    <property type="term" value="F:ATP binding"/>
    <property type="evidence" value="ECO:0007669"/>
    <property type="project" value="UniProtKB-KW"/>
</dbReference>
<dbReference type="GO" id="GO:0000049">
    <property type="term" value="F:tRNA binding"/>
    <property type="evidence" value="ECO:0007669"/>
    <property type="project" value="UniProtKB-KW"/>
</dbReference>
<dbReference type="GO" id="GO:0061708">
    <property type="term" value="F:tRNA-5-taurinomethyluridine 2-sulfurtransferase"/>
    <property type="evidence" value="ECO:0007669"/>
    <property type="project" value="UniProtKB-EC"/>
</dbReference>
<dbReference type="GO" id="GO:0002143">
    <property type="term" value="P:tRNA wobble position uridine thiolation"/>
    <property type="evidence" value="ECO:0000318"/>
    <property type="project" value="GO_Central"/>
</dbReference>
<dbReference type="CDD" id="cd01998">
    <property type="entry name" value="MnmA_TRMU-like"/>
    <property type="match status" value="1"/>
</dbReference>
<dbReference type="FunFam" id="2.40.30.10:FF:000057">
    <property type="entry name" value="Mitochondrial tRNA-specific 2-thiouridylase 1"/>
    <property type="match status" value="1"/>
</dbReference>
<dbReference type="FunFam" id="3.40.50.620:FF:000104">
    <property type="entry name" value="Mitochondrial tRNA-specific 2-thiouridylase 1"/>
    <property type="match status" value="1"/>
</dbReference>
<dbReference type="FunFam" id="2.30.30.280:FF:000001">
    <property type="entry name" value="tRNA-specific 2-thiouridylase MnmA"/>
    <property type="match status" value="1"/>
</dbReference>
<dbReference type="Gene3D" id="2.30.30.280">
    <property type="entry name" value="Adenine nucleotide alpha hydrolases-like domains"/>
    <property type="match status" value="1"/>
</dbReference>
<dbReference type="Gene3D" id="3.40.50.620">
    <property type="entry name" value="HUPs"/>
    <property type="match status" value="1"/>
</dbReference>
<dbReference type="Gene3D" id="2.40.30.10">
    <property type="entry name" value="Translation factors"/>
    <property type="match status" value="1"/>
</dbReference>
<dbReference type="HAMAP" id="MF_00144">
    <property type="entry name" value="tRNA_thiouridyl_MnmA"/>
    <property type="match status" value="1"/>
</dbReference>
<dbReference type="InterPro" id="IPR004506">
    <property type="entry name" value="MnmA-like"/>
</dbReference>
<dbReference type="InterPro" id="IPR046885">
    <property type="entry name" value="MnmA-like_C"/>
</dbReference>
<dbReference type="InterPro" id="IPR046884">
    <property type="entry name" value="MnmA-like_central"/>
</dbReference>
<dbReference type="InterPro" id="IPR023382">
    <property type="entry name" value="MnmA-like_central_sf"/>
</dbReference>
<dbReference type="InterPro" id="IPR014729">
    <property type="entry name" value="Rossmann-like_a/b/a_fold"/>
</dbReference>
<dbReference type="NCBIfam" id="NF001138">
    <property type="entry name" value="PRK00143.1"/>
    <property type="match status" value="1"/>
</dbReference>
<dbReference type="PANTHER" id="PTHR11933:SF5">
    <property type="entry name" value="MITOCHONDRIAL TRNA-SPECIFIC 2-THIOURIDYLASE 1"/>
    <property type="match status" value="1"/>
</dbReference>
<dbReference type="PANTHER" id="PTHR11933">
    <property type="entry name" value="TRNA 5-METHYLAMINOMETHYL-2-THIOURIDYLATE -METHYLTRANSFERASE"/>
    <property type="match status" value="1"/>
</dbReference>
<dbReference type="Pfam" id="PF03054">
    <property type="entry name" value="tRNA_Me_trans"/>
    <property type="match status" value="1"/>
</dbReference>
<dbReference type="Pfam" id="PF20258">
    <property type="entry name" value="tRNA_Me_trans_C"/>
    <property type="match status" value="1"/>
</dbReference>
<dbReference type="Pfam" id="PF20259">
    <property type="entry name" value="tRNA_Me_trans_M"/>
    <property type="match status" value="1"/>
</dbReference>
<dbReference type="SUPFAM" id="SSF52402">
    <property type="entry name" value="Adenine nucleotide alpha hydrolases-like"/>
    <property type="match status" value="1"/>
</dbReference>